<feature type="peptide" id="PRO_0000302110" description="U11-ctenitoxin-Co1a">
    <location>
        <begin position="1"/>
        <end position="18" status="greater than"/>
    </location>
</feature>
<feature type="disulfide bond" evidence="3">
    <location>
        <begin position="3"/>
        <end position="17"/>
    </location>
</feature>
<feature type="disulfide bond" evidence="3">
    <location>
        <begin position="10"/>
        <end status="unknown"/>
    </location>
</feature>
<feature type="disulfide bond" evidence="3">
    <location>
        <begin position="16"/>
        <end status="unknown"/>
    </location>
</feature>
<feature type="non-terminal residue">
    <location>
        <position position="18"/>
    </location>
</feature>
<protein>
    <recommendedName>
        <fullName>U11-ctenitoxin-Co1a</fullName>
        <shortName>U11-CNTX-Co1a</shortName>
    </recommendedName>
    <alternativeName>
        <fullName>Neurotoxin Oc M10-6</fullName>
    </alternativeName>
</protein>
<keyword id="KW-0903">Direct protein sequencing</keyword>
<keyword id="KW-1015">Disulfide bond</keyword>
<keyword id="KW-0960">Knottin</keyword>
<keyword id="KW-0528">Neurotoxin</keyword>
<keyword id="KW-0964">Secreted</keyword>
<keyword id="KW-0800">Toxin</keyword>
<sequence>KKCADIDQDCKTSCDCCE</sequence>
<organism>
    <name type="scientific">Ctenus ornatus</name>
    <name type="common">Brazilian spider</name>
    <name type="synonym">Oligoctenus ornatus</name>
    <dbReference type="NCBI Taxonomy" id="406443"/>
    <lineage>
        <taxon>Eukaryota</taxon>
        <taxon>Metazoa</taxon>
        <taxon>Ecdysozoa</taxon>
        <taxon>Arthropoda</taxon>
        <taxon>Chelicerata</taxon>
        <taxon>Arachnida</taxon>
        <taxon>Araneae</taxon>
        <taxon>Araneomorphae</taxon>
        <taxon>Entelegynae</taxon>
        <taxon>Lycosoidea</taxon>
        <taxon>Ctenidae</taxon>
        <taxon>Oligoctenus</taxon>
    </lineage>
</organism>
<name>TX36A_CTEON</name>
<comment type="function">
    <text evidence="1">Neurotoxin.</text>
</comment>
<comment type="subcellular location">
    <subcellularLocation>
        <location evidence="2">Secreted</location>
    </subcellularLocation>
</comment>
<comment type="tissue specificity">
    <text evidence="2">Expressed by the venom gland.</text>
</comment>
<comment type="domain">
    <text evidence="3">The presence of a 'disulfide through disulfide knot' structurally defines this protein as a knottin.</text>
</comment>
<comment type="mass spectrometry"/>
<comment type="similarity">
    <text evidence="3">Belongs to the neurotoxin 03 (Tx2) family. 06 subfamily.</text>
</comment>
<dbReference type="ArachnoServer" id="AS000362">
    <property type="toxin name" value="U11-ctenitoxin-Co1a (N-terminal fragment)"/>
</dbReference>
<dbReference type="GO" id="GO:0005576">
    <property type="term" value="C:extracellular region"/>
    <property type="evidence" value="ECO:0007669"/>
    <property type="project" value="UniProtKB-SubCell"/>
</dbReference>
<dbReference type="GO" id="GO:0090729">
    <property type="term" value="F:toxin activity"/>
    <property type="evidence" value="ECO:0007669"/>
    <property type="project" value="UniProtKB-KW"/>
</dbReference>
<proteinExistence type="evidence at protein level"/>
<evidence type="ECO:0000250" key="1">
    <source>
        <dbReference type="UniProtKB" id="P83896"/>
    </source>
</evidence>
<evidence type="ECO:0000269" key="2">
    <source ref="1"/>
</evidence>
<evidence type="ECO:0000305" key="3"/>
<reference evidence="3" key="1">
    <citation type="submission" date="2007-07" db="UniProtKB">
        <authorList>
            <person name="Borges M.H."/>
            <person name="Oliveira C.F.B."/>
            <person name="Goncalves J.M."/>
            <person name="Rates B."/>
            <person name="Santos D.M."/>
            <person name="Pimenta A.M.C."/>
            <person name="Cordeiro M.N."/>
            <person name="Richardson M."/>
        </authorList>
    </citation>
    <scope>PROTEIN SEQUENCE</scope>
    <scope>SUBCELLULAR LOCATION</scope>
    <scope>TISSUE SPECIFICITY</scope>
    <scope>MASS SPECTROMETRY</scope>
    <source>
        <tissue>Venom</tissue>
    </source>
</reference>
<accession>P85235</accession>